<comment type="function">
    <text evidence="1">Catalyzes the oxidation of either pyridoxine 5'-phosphate (PNP) or pyridoxamine 5'-phosphate (PMP) into pyridoxal 5'-phosphate (PLP).</text>
</comment>
<comment type="catalytic activity">
    <reaction evidence="1">
        <text>pyridoxamine 5'-phosphate + O2 + H2O = pyridoxal 5'-phosphate + H2O2 + NH4(+)</text>
        <dbReference type="Rhea" id="RHEA:15817"/>
        <dbReference type="ChEBI" id="CHEBI:15377"/>
        <dbReference type="ChEBI" id="CHEBI:15379"/>
        <dbReference type="ChEBI" id="CHEBI:16240"/>
        <dbReference type="ChEBI" id="CHEBI:28938"/>
        <dbReference type="ChEBI" id="CHEBI:58451"/>
        <dbReference type="ChEBI" id="CHEBI:597326"/>
        <dbReference type="EC" id="1.4.3.5"/>
    </reaction>
</comment>
<comment type="catalytic activity">
    <reaction evidence="1">
        <text>pyridoxine 5'-phosphate + O2 = pyridoxal 5'-phosphate + H2O2</text>
        <dbReference type="Rhea" id="RHEA:15149"/>
        <dbReference type="ChEBI" id="CHEBI:15379"/>
        <dbReference type="ChEBI" id="CHEBI:16240"/>
        <dbReference type="ChEBI" id="CHEBI:58589"/>
        <dbReference type="ChEBI" id="CHEBI:597326"/>
        <dbReference type="EC" id="1.4.3.5"/>
    </reaction>
</comment>
<comment type="cofactor">
    <cofactor evidence="1">
        <name>FMN</name>
        <dbReference type="ChEBI" id="CHEBI:58210"/>
    </cofactor>
    <text evidence="1">Binds 1 FMN per subunit.</text>
</comment>
<comment type="pathway">
    <text evidence="1">Cofactor metabolism; pyridoxal 5'-phosphate salvage; pyridoxal 5'-phosphate from pyridoxamine 5'-phosphate: step 1/1.</text>
</comment>
<comment type="pathway">
    <text evidence="1">Cofactor metabolism; pyridoxal 5'-phosphate salvage; pyridoxal 5'-phosphate from pyridoxine 5'-phosphate: step 1/1.</text>
</comment>
<comment type="subunit">
    <text evidence="1">Homodimer.</text>
</comment>
<comment type="similarity">
    <text evidence="1">Belongs to the pyridoxamine 5'-phosphate oxidase family.</text>
</comment>
<keyword id="KW-0285">Flavoprotein</keyword>
<keyword id="KW-0288">FMN</keyword>
<keyword id="KW-0560">Oxidoreductase</keyword>
<keyword id="KW-0664">Pyridoxine biosynthesis</keyword>
<dbReference type="EC" id="1.4.3.5" evidence="1"/>
<dbReference type="EMBL" id="AM408590">
    <property type="protein sequence ID" value="CAL72620.1"/>
    <property type="molecule type" value="Genomic_DNA"/>
</dbReference>
<dbReference type="RefSeq" id="WP_003413471.1">
    <property type="nucleotide sequence ID" value="NC_008769.1"/>
</dbReference>
<dbReference type="SMR" id="A1KLV7"/>
<dbReference type="GeneID" id="45426610"/>
<dbReference type="KEGG" id="mbb:BCG_2632"/>
<dbReference type="HOGENOM" id="CLU_032263_2_2_11"/>
<dbReference type="UniPathway" id="UPA01068">
    <property type="reaction ID" value="UER00304"/>
</dbReference>
<dbReference type="UniPathway" id="UPA01068">
    <property type="reaction ID" value="UER00305"/>
</dbReference>
<dbReference type="Proteomes" id="UP000001472">
    <property type="component" value="Chromosome"/>
</dbReference>
<dbReference type="GO" id="GO:0010181">
    <property type="term" value="F:FMN binding"/>
    <property type="evidence" value="ECO:0007669"/>
    <property type="project" value="UniProtKB-UniRule"/>
</dbReference>
<dbReference type="GO" id="GO:0004733">
    <property type="term" value="F:pyridoxamine phosphate oxidase activity"/>
    <property type="evidence" value="ECO:0007669"/>
    <property type="project" value="UniProtKB-UniRule"/>
</dbReference>
<dbReference type="GO" id="GO:0008615">
    <property type="term" value="P:pyridoxine biosynthetic process"/>
    <property type="evidence" value="ECO:0007669"/>
    <property type="project" value="UniProtKB-KW"/>
</dbReference>
<dbReference type="FunFam" id="2.30.110.10:FF:000021">
    <property type="entry name" value="Pyridoxine 5'-phosphate oxidase"/>
    <property type="match status" value="1"/>
</dbReference>
<dbReference type="Gene3D" id="2.30.110.10">
    <property type="entry name" value="Electron Transport, Fmn-binding Protein, Chain A"/>
    <property type="match status" value="1"/>
</dbReference>
<dbReference type="HAMAP" id="MF_01629">
    <property type="entry name" value="PdxH"/>
    <property type="match status" value="1"/>
</dbReference>
<dbReference type="InterPro" id="IPR000659">
    <property type="entry name" value="Pyridox_Oxase"/>
</dbReference>
<dbReference type="InterPro" id="IPR019740">
    <property type="entry name" value="Pyridox_Oxase_CS"/>
</dbReference>
<dbReference type="InterPro" id="IPR011576">
    <property type="entry name" value="Pyridox_Oxase_N"/>
</dbReference>
<dbReference type="InterPro" id="IPR019576">
    <property type="entry name" value="Pyridoxamine_oxidase_dimer_C"/>
</dbReference>
<dbReference type="InterPro" id="IPR012349">
    <property type="entry name" value="Split_barrel_FMN-bd"/>
</dbReference>
<dbReference type="NCBIfam" id="TIGR00558">
    <property type="entry name" value="pdxH"/>
    <property type="match status" value="1"/>
</dbReference>
<dbReference type="NCBIfam" id="NF004231">
    <property type="entry name" value="PRK05679.1"/>
    <property type="match status" value="1"/>
</dbReference>
<dbReference type="PANTHER" id="PTHR10851:SF0">
    <property type="entry name" value="PYRIDOXINE-5'-PHOSPHATE OXIDASE"/>
    <property type="match status" value="1"/>
</dbReference>
<dbReference type="PANTHER" id="PTHR10851">
    <property type="entry name" value="PYRIDOXINE-5-PHOSPHATE OXIDASE"/>
    <property type="match status" value="1"/>
</dbReference>
<dbReference type="Pfam" id="PF10590">
    <property type="entry name" value="PNP_phzG_C"/>
    <property type="match status" value="1"/>
</dbReference>
<dbReference type="Pfam" id="PF01243">
    <property type="entry name" value="PNPOx_N"/>
    <property type="match status" value="1"/>
</dbReference>
<dbReference type="PIRSF" id="PIRSF000190">
    <property type="entry name" value="Pyd_amn-ph_oxd"/>
    <property type="match status" value="1"/>
</dbReference>
<dbReference type="SUPFAM" id="SSF50475">
    <property type="entry name" value="FMN-binding split barrel"/>
    <property type="match status" value="1"/>
</dbReference>
<dbReference type="PROSITE" id="PS01064">
    <property type="entry name" value="PYRIDOX_OXIDASE"/>
    <property type="match status" value="1"/>
</dbReference>
<proteinExistence type="inferred from homology"/>
<organism>
    <name type="scientific">Mycobacterium bovis (strain BCG / Pasteur 1173P2)</name>
    <dbReference type="NCBI Taxonomy" id="410289"/>
    <lineage>
        <taxon>Bacteria</taxon>
        <taxon>Bacillati</taxon>
        <taxon>Actinomycetota</taxon>
        <taxon>Actinomycetes</taxon>
        <taxon>Mycobacteriales</taxon>
        <taxon>Mycobacteriaceae</taxon>
        <taxon>Mycobacterium</taxon>
        <taxon>Mycobacterium tuberculosis complex</taxon>
    </lineage>
</organism>
<reference key="1">
    <citation type="journal article" date="2007" name="Proc. Natl. Acad. Sci. U.S.A.">
        <title>Genome plasticity of BCG and impact on vaccine efficacy.</title>
        <authorList>
            <person name="Brosch R."/>
            <person name="Gordon S.V."/>
            <person name="Garnier T."/>
            <person name="Eiglmeier K."/>
            <person name="Frigui W."/>
            <person name="Valenti P."/>
            <person name="Dos Santos S."/>
            <person name="Duthoy S."/>
            <person name="Lacroix C."/>
            <person name="Garcia-Pelayo C."/>
            <person name="Inwald J.K."/>
            <person name="Golby P."/>
            <person name="Garcia J.N."/>
            <person name="Hewinson R.G."/>
            <person name="Behr M.A."/>
            <person name="Quail M.A."/>
            <person name="Churcher C."/>
            <person name="Barrell B.G."/>
            <person name="Parkhill J."/>
            <person name="Cole S.T."/>
        </authorList>
    </citation>
    <scope>NUCLEOTIDE SEQUENCE [LARGE SCALE GENOMIC DNA]</scope>
    <source>
        <strain>BCG / Pasteur 1173P2</strain>
    </source>
</reference>
<protein>
    <recommendedName>
        <fullName evidence="1">Pyridoxine/pyridoxamine 5'-phosphate oxidase</fullName>
        <ecNumber evidence="1">1.4.3.5</ecNumber>
    </recommendedName>
    <alternativeName>
        <fullName evidence="1">PNP/PMP oxidase</fullName>
        <shortName evidence="1">PNPOx</shortName>
    </alternativeName>
    <alternativeName>
        <fullName evidence="1">Pyridoxal 5'-phosphate synthase</fullName>
    </alternativeName>
</protein>
<feature type="chain" id="PRO_0000292305" description="Pyridoxine/pyridoxamine 5'-phosphate oxidase">
    <location>
        <begin position="1"/>
        <end position="224"/>
    </location>
</feature>
<feature type="binding site" evidence="1">
    <location>
        <begin position="19"/>
        <end position="22"/>
    </location>
    <ligand>
        <name>substrate</name>
    </ligand>
</feature>
<feature type="binding site" evidence="1">
    <location>
        <begin position="76"/>
        <end position="81"/>
    </location>
    <ligand>
        <name>FMN</name>
        <dbReference type="ChEBI" id="CHEBI:58210"/>
    </ligand>
</feature>
<feature type="binding site" evidence="1">
    <location>
        <position position="81"/>
    </location>
    <ligand>
        <name>substrate</name>
    </ligand>
</feature>
<feature type="binding site" evidence="1">
    <location>
        <begin position="91"/>
        <end position="92"/>
    </location>
    <ligand>
        <name>FMN</name>
        <dbReference type="ChEBI" id="CHEBI:58210"/>
    </ligand>
</feature>
<feature type="binding site" evidence="1">
    <location>
        <position position="98"/>
    </location>
    <ligand>
        <name>FMN</name>
        <dbReference type="ChEBI" id="CHEBI:58210"/>
    </ligand>
</feature>
<feature type="binding site" evidence="1">
    <location>
        <position position="120"/>
    </location>
    <ligand>
        <name>FMN</name>
        <dbReference type="ChEBI" id="CHEBI:58210"/>
    </ligand>
</feature>
<feature type="binding site" evidence="1">
    <location>
        <position position="138"/>
    </location>
    <ligand>
        <name>substrate</name>
    </ligand>
</feature>
<feature type="binding site" evidence="1">
    <location>
        <position position="142"/>
    </location>
    <ligand>
        <name>substrate</name>
    </ligand>
</feature>
<feature type="binding site" evidence="1">
    <location>
        <begin position="155"/>
        <end position="156"/>
    </location>
    <ligand>
        <name>FMN</name>
        <dbReference type="ChEBI" id="CHEBI:58210"/>
    </ligand>
</feature>
<feature type="binding site" evidence="1">
    <location>
        <position position="201"/>
    </location>
    <ligand>
        <name>FMN</name>
        <dbReference type="ChEBI" id="CHEBI:58210"/>
    </ligand>
</feature>
<feature type="binding site" evidence="1">
    <location>
        <begin position="207"/>
        <end position="209"/>
    </location>
    <ligand>
        <name>substrate</name>
    </ligand>
</feature>
<feature type="binding site" evidence="1">
    <location>
        <position position="211"/>
    </location>
    <ligand>
        <name>FMN</name>
        <dbReference type="ChEBI" id="CHEBI:58210"/>
    </ligand>
</feature>
<accession>A1KLV7</accession>
<gene>
    <name evidence="1" type="primary">pdxH</name>
    <name type="ordered locus">BCG_2632</name>
</gene>
<sequence length="224" mass="25186">MDDDAQMVAIDKDQLARMRGEYGPEKDGCGDLDFDWLDDGWLTLLRRWLNDAQRAGVSEPNAMVLATVADGKPVTRSVLCKILDESGVAFFTSYTSAKGEQLAVTPYASATFPWYQLGRQAHVQGPVSKVSTEEIFTYWSMRPRGAQLGAWASQQSRPVGSRAQLDNQLAEVTRRFADQDQIPVPPGWGGYRIAPEIVEFWQGRENRMHNRIRVANGRLERLQP</sequence>
<evidence type="ECO:0000255" key="1">
    <source>
        <dbReference type="HAMAP-Rule" id="MF_01629"/>
    </source>
</evidence>
<name>PDXH_MYCBP</name>